<protein>
    <recommendedName>
        <fullName evidence="1">Ferrochelatase</fullName>
        <ecNumber evidence="1">4.98.1.1</ecNumber>
    </recommendedName>
    <alternativeName>
        <fullName evidence="1">Heme synthase</fullName>
    </alternativeName>
    <alternativeName>
        <fullName evidence="1">Protoheme ferro-lyase</fullName>
    </alternativeName>
</protein>
<evidence type="ECO:0000255" key="1">
    <source>
        <dbReference type="HAMAP-Rule" id="MF_00323"/>
    </source>
</evidence>
<dbReference type="EC" id="4.98.1.1" evidence="1"/>
<dbReference type="EMBL" id="CP000551">
    <property type="protein sequence ID" value="ABM69867.1"/>
    <property type="molecule type" value="Genomic_DNA"/>
</dbReference>
<dbReference type="RefSeq" id="WP_011818033.1">
    <property type="nucleotide sequence ID" value="NC_008816.1"/>
</dbReference>
<dbReference type="SMR" id="A2BQ06"/>
<dbReference type="STRING" id="146891.A9601_05811"/>
<dbReference type="KEGG" id="pmb:A9601_05811"/>
<dbReference type="eggNOG" id="COG0276">
    <property type="taxonomic scope" value="Bacteria"/>
</dbReference>
<dbReference type="HOGENOM" id="CLU_018884_4_3_3"/>
<dbReference type="OrthoDB" id="9809741at2"/>
<dbReference type="UniPathway" id="UPA00252">
    <property type="reaction ID" value="UER00325"/>
</dbReference>
<dbReference type="Proteomes" id="UP000002590">
    <property type="component" value="Chromosome"/>
</dbReference>
<dbReference type="GO" id="GO:0005737">
    <property type="term" value="C:cytoplasm"/>
    <property type="evidence" value="ECO:0007669"/>
    <property type="project" value="UniProtKB-SubCell"/>
</dbReference>
<dbReference type="GO" id="GO:0004325">
    <property type="term" value="F:ferrochelatase activity"/>
    <property type="evidence" value="ECO:0007669"/>
    <property type="project" value="UniProtKB-UniRule"/>
</dbReference>
<dbReference type="GO" id="GO:0046872">
    <property type="term" value="F:metal ion binding"/>
    <property type="evidence" value="ECO:0007669"/>
    <property type="project" value="UniProtKB-KW"/>
</dbReference>
<dbReference type="GO" id="GO:0006783">
    <property type="term" value="P:heme biosynthetic process"/>
    <property type="evidence" value="ECO:0007669"/>
    <property type="project" value="UniProtKB-UniRule"/>
</dbReference>
<dbReference type="CDD" id="cd00419">
    <property type="entry name" value="Ferrochelatase_C"/>
    <property type="match status" value="1"/>
</dbReference>
<dbReference type="CDD" id="cd03411">
    <property type="entry name" value="Ferrochelatase_N"/>
    <property type="match status" value="1"/>
</dbReference>
<dbReference type="FunFam" id="3.40.50.1400:FF:000006">
    <property type="entry name" value="Ferrochelatase"/>
    <property type="match status" value="1"/>
</dbReference>
<dbReference type="Gene3D" id="3.40.50.1400">
    <property type="match status" value="2"/>
</dbReference>
<dbReference type="HAMAP" id="MF_00323">
    <property type="entry name" value="Ferrochelatase"/>
    <property type="match status" value="1"/>
</dbReference>
<dbReference type="InterPro" id="IPR001015">
    <property type="entry name" value="Ferrochelatase"/>
</dbReference>
<dbReference type="InterPro" id="IPR019772">
    <property type="entry name" value="Ferrochelatase_AS"/>
</dbReference>
<dbReference type="InterPro" id="IPR033644">
    <property type="entry name" value="Ferrochelatase_C"/>
</dbReference>
<dbReference type="InterPro" id="IPR033659">
    <property type="entry name" value="Ferrochelatase_N"/>
</dbReference>
<dbReference type="NCBIfam" id="TIGR00109">
    <property type="entry name" value="hemH"/>
    <property type="match status" value="1"/>
</dbReference>
<dbReference type="PANTHER" id="PTHR11108">
    <property type="entry name" value="FERROCHELATASE"/>
    <property type="match status" value="1"/>
</dbReference>
<dbReference type="PANTHER" id="PTHR11108:SF1">
    <property type="entry name" value="FERROCHELATASE, MITOCHONDRIAL"/>
    <property type="match status" value="1"/>
</dbReference>
<dbReference type="Pfam" id="PF00762">
    <property type="entry name" value="Ferrochelatase"/>
    <property type="match status" value="1"/>
</dbReference>
<dbReference type="SUPFAM" id="SSF53800">
    <property type="entry name" value="Chelatase"/>
    <property type="match status" value="1"/>
</dbReference>
<dbReference type="SUPFAM" id="SSF103511">
    <property type="entry name" value="Chlorophyll a-b binding protein"/>
    <property type="match status" value="1"/>
</dbReference>
<dbReference type="PROSITE" id="PS00534">
    <property type="entry name" value="FERROCHELATASE"/>
    <property type="match status" value="1"/>
</dbReference>
<feature type="chain" id="PRO_1000019340" description="Ferrochelatase">
    <location>
        <begin position="1"/>
        <end position="391"/>
    </location>
</feature>
<feature type="binding site" evidence="1">
    <location>
        <position position="196"/>
    </location>
    <ligand>
        <name>Fe cation</name>
        <dbReference type="ChEBI" id="CHEBI:24875"/>
    </ligand>
</feature>
<feature type="binding site" evidence="1">
    <location>
        <position position="281"/>
    </location>
    <ligand>
        <name>Fe cation</name>
        <dbReference type="ChEBI" id="CHEBI:24875"/>
    </ligand>
</feature>
<comment type="function">
    <text evidence="1">Catalyzes the ferrous insertion into protoporphyrin IX.</text>
</comment>
<comment type="catalytic activity">
    <reaction evidence="1">
        <text>heme b + 2 H(+) = protoporphyrin IX + Fe(2+)</text>
        <dbReference type="Rhea" id="RHEA:22584"/>
        <dbReference type="ChEBI" id="CHEBI:15378"/>
        <dbReference type="ChEBI" id="CHEBI:29033"/>
        <dbReference type="ChEBI" id="CHEBI:57306"/>
        <dbReference type="ChEBI" id="CHEBI:60344"/>
        <dbReference type="EC" id="4.98.1.1"/>
    </reaction>
</comment>
<comment type="pathway">
    <text evidence="1">Porphyrin-containing compound metabolism; protoheme biosynthesis; protoheme from protoporphyrin-IX: step 1/1.</text>
</comment>
<comment type="subcellular location">
    <subcellularLocation>
        <location evidence="1">Cytoplasm</location>
    </subcellularLocation>
</comment>
<comment type="similarity">
    <text evidence="1">Belongs to the ferrochelatase family.</text>
</comment>
<sequence length="391" mass="44252">MDKIGVLLMNLGGPERITDVGPFLYNLFSDPEIIRTPFPVFQKPLAWLISTLRSTTSQQAYLSIGGGSPIRRITEQQARELQSKLRDKGLNATTYIAMRYWHPFTESAIADMKADGIDQVVVIPLYPHFSISTSGSSFRELKKLRDADDEFKRVPMRCVRSWFSQSGYLKSMVELISEQISLCELPSKAHIFFTAHGVPKSYVEEAGDPYKQQIEDCSLLIINELEKCLGHTNPHTLSYQSRVGPVEWLKPYTEEVLADLGRSNVNDLIVVPISFVGEHIETLQEIDIEYKEIAEKAGIKNFRRVKALNTHPTFIEGLSDLVISCLEGPQVNLEEASKLPEKVKLYPQEKWQWGWNNSSEVWNGRVAMIIFLVLFIELISGSGPLHKLGIL</sequence>
<gene>
    <name evidence="1" type="primary">hemH</name>
    <name type="ordered locus">A9601_05811</name>
</gene>
<keyword id="KW-0963">Cytoplasm</keyword>
<keyword id="KW-0350">Heme biosynthesis</keyword>
<keyword id="KW-0408">Iron</keyword>
<keyword id="KW-0456">Lyase</keyword>
<keyword id="KW-0479">Metal-binding</keyword>
<keyword id="KW-0627">Porphyrin biosynthesis</keyword>
<name>HEMH_PROMS</name>
<proteinExistence type="inferred from homology"/>
<reference key="1">
    <citation type="journal article" date="2007" name="PLoS Genet.">
        <title>Patterns and implications of gene gain and loss in the evolution of Prochlorococcus.</title>
        <authorList>
            <person name="Kettler G.C."/>
            <person name="Martiny A.C."/>
            <person name="Huang K."/>
            <person name="Zucker J."/>
            <person name="Coleman M.L."/>
            <person name="Rodrigue S."/>
            <person name="Chen F."/>
            <person name="Lapidus A."/>
            <person name="Ferriera S."/>
            <person name="Johnson J."/>
            <person name="Steglich C."/>
            <person name="Church G.M."/>
            <person name="Richardson P."/>
            <person name="Chisholm S.W."/>
        </authorList>
    </citation>
    <scope>NUCLEOTIDE SEQUENCE [LARGE SCALE GENOMIC DNA]</scope>
    <source>
        <strain>AS9601</strain>
    </source>
</reference>
<organism>
    <name type="scientific">Prochlorococcus marinus (strain AS9601)</name>
    <dbReference type="NCBI Taxonomy" id="146891"/>
    <lineage>
        <taxon>Bacteria</taxon>
        <taxon>Bacillati</taxon>
        <taxon>Cyanobacteriota</taxon>
        <taxon>Cyanophyceae</taxon>
        <taxon>Synechococcales</taxon>
        <taxon>Prochlorococcaceae</taxon>
        <taxon>Prochlorococcus</taxon>
    </lineage>
</organism>
<accession>A2BQ06</accession>